<accession>B4E5A8</accession>
<reference key="1">
    <citation type="journal article" date="2009" name="J. Bacteriol.">
        <title>The genome of Burkholderia cenocepacia J2315, an epidemic pathogen of cystic fibrosis patients.</title>
        <authorList>
            <person name="Holden M.T."/>
            <person name="Seth-Smith H.M."/>
            <person name="Crossman L.C."/>
            <person name="Sebaihia M."/>
            <person name="Bentley S.D."/>
            <person name="Cerdeno-Tarraga A.M."/>
            <person name="Thomson N.R."/>
            <person name="Bason N."/>
            <person name="Quail M.A."/>
            <person name="Sharp S."/>
            <person name="Cherevach I."/>
            <person name="Churcher C."/>
            <person name="Goodhead I."/>
            <person name="Hauser H."/>
            <person name="Holroyd N."/>
            <person name="Mungall K."/>
            <person name="Scott P."/>
            <person name="Walker D."/>
            <person name="White B."/>
            <person name="Rose H."/>
            <person name="Iversen P."/>
            <person name="Mil-Homens D."/>
            <person name="Rocha E.P."/>
            <person name="Fialho A.M."/>
            <person name="Baldwin A."/>
            <person name="Dowson C."/>
            <person name="Barrell B.G."/>
            <person name="Govan J.R."/>
            <person name="Vandamme P."/>
            <person name="Hart C.A."/>
            <person name="Mahenthiralingam E."/>
            <person name="Parkhill J."/>
        </authorList>
    </citation>
    <scope>NUCLEOTIDE SEQUENCE [LARGE SCALE GENOMIC DNA]</scope>
    <source>
        <strain>ATCC BAA-245 / DSM 16553 / LMG 16656 / NCTC 13227 / J2315 / CF5610</strain>
    </source>
</reference>
<organism>
    <name type="scientific">Burkholderia cenocepacia (strain ATCC BAA-245 / DSM 16553 / LMG 16656 / NCTC 13227 / J2315 / CF5610)</name>
    <name type="common">Burkholderia cepacia (strain J2315)</name>
    <dbReference type="NCBI Taxonomy" id="216591"/>
    <lineage>
        <taxon>Bacteria</taxon>
        <taxon>Pseudomonadati</taxon>
        <taxon>Pseudomonadota</taxon>
        <taxon>Betaproteobacteria</taxon>
        <taxon>Burkholderiales</taxon>
        <taxon>Burkholderiaceae</taxon>
        <taxon>Burkholderia</taxon>
        <taxon>Burkholderia cepacia complex</taxon>
    </lineage>
</organism>
<sequence>MAKKIIGFIKLQIPAGKANPSPPVGPALGQRGLNIMEFCKAFNAQTQGMEPGLPVPVVITAFADKSFTFVMKTPPATVLIKKAAKVDKGSSKPHTDKVGSITRAQAEEIAKTKMPDLTAADLDAAVRTIAGSARSMGITVEGV</sequence>
<protein>
    <recommendedName>
        <fullName evidence="1">Large ribosomal subunit protein uL11</fullName>
    </recommendedName>
    <alternativeName>
        <fullName evidence="2">50S ribosomal protein L11</fullName>
    </alternativeName>
</protein>
<proteinExistence type="inferred from homology"/>
<gene>
    <name evidence="1" type="primary">rplK</name>
    <name type="ordered locus">BceJ2315_02250</name>
    <name type="ORF">BCAL0222</name>
</gene>
<evidence type="ECO:0000255" key="1">
    <source>
        <dbReference type="HAMAP-Rule" id="MF_00736"/>
    </source>
</evidence>
<evidence type="ECO:0000305" key="2"/>
<dbReference type="EMBL" id="AM747720">
    <property type="protein sequence ID" value="CAR50533.1"/>
    <property type="molecule type" value="Genomic_DNA"/>
</dbReference>
<dbReference type="RefSeq" id="WP_006477201.1">
    <property type="nucleotide sequence ID" value="NC_011000.1"/>
</dbReference>
<dbReference type="SMR" id="B4E5A8"/>
<dbReference type="GeneID" id="93193463"/>
<dbReference type="KEGG" id="bcj:BCAL0222"/>
<dbReference type="eggNOG" id="COG0080">
    <property type="taxonomic scope" value="Bacteria"/>
</dbReference>
<dbReference type="HOGENOM" id="CLU_074237_2_0_4"/>
<dbReference type="BioCyc" id="BCEN216591:G1G1V-264-MONOMER"/>
<dbReference type="Proteomes" id="UP000001035">
    <property type="component" value="Chromosome 1"/>
</dbReference>
<dbReference type="GO" id="GO:0022625">
    <property type="term" value="C:cytosolic large ribosomal subunit"/>
    <property type="evidence" value="ECO:0007669"/>
    <property type="project" value="TreeGrafter"/>
</dbReference>
<dbReference type="GO" id="GO:0070180">
    <property type="term" value="F:large ribosomal subunit rRNA binding"/>
    <property type="evidence" value="ECO:0007669"/>
    <property type="project" value="UniProtKB-UniRule"/>
</dbReference>
<dbReference type="GO" id="GO:0003735">
    <property type="term" value="F:structural constituent of ribosome"/>
    <property type="evidence" value="ECO:0007669"/>
    <property type="project" value="InterPro"/>
</dbReference>
<dbReference type="GO" id="GO:0006412">
    <property type="term" value="P:translation"/>
    <property type="evidence" value="ECO:0007669"/>
    <property type="project" value="UniProtKB-UniRule"/>
</dbReference>
<dbReference type="CDD" id="cd00349">
    <property type="entry name" value="Ribosomal_L11"/>
    <property type="match status" value="1"/>
</dbReference>
<dbReference type="FunFam" id="1.10.10.250:FF:000001">
    <property type="entry name" value="50S ribosomal protein L11"/>
    <property type="match status" value="1"/>
</dbReference>
<dbReference type="FunFam" id="3.30.1550.10:FF:000001">
    <property type="entry name" value="50S ribosomal protein L11"/>
    <property type="match status" value="1"/>
</dbReference>
<dbReference type="Gene3D" id="1.10.10.250">
    <property type="entry name" value="Ribosomal protein L11, C-terminal domain"/>
    <property type="match status" value="1"/>
</dbReference>
<dbReference type="Gene3D" id="3.30.1550.10">
    <property type="entry name" value="Ribosomal protein L11/L12, N-terminal domain"/>
    <property type="match status" value="1"/>
</dbReference>
<dbReference type="HAMAP" id="MF_00736">
    <property type="entry name" value="Ribosomal_uL11"/>
    <property type="match status" value="1"/>
</dbReference>
<dbReference type="InterPro" id="IPR000911">
    <property type="entry name" value="Ribosomal_uL11"/>
</dbReference>
<dbReference type="InterPro" id="IPR006519">
    <property type="entry name" value="Ribosomal_uL11_bac-typ"/>
</dbReference>
<dbReference type="InterPro" id="IPR020783">
    <property type="entry name" value="Ribosomal_uL11_C"/>
</dbReference>
<dbReference type="InterPro" id="IPR036769">
    <property type="entry name" value="Ribosomal_uL11_C_sf"/>
</dbReference>
<dbReference type="InterPro" id="IPR020785">
    <property type="entry name" value="Ribosomal_uL11_CS"/>
</dbReference>
<dbReference type="InterPro" id="IPR020784">
    <property type="entry name" value="Ribosomal_uL11_N"/>
</dbReference>
<dbReference type="InterPro" id="IPR036796">
    <property type="entry name" value="Ribosomal_uL11_N_sf"/>
</dbReference>
<dbReference type="NCBIfam" id="TIGR01632">
    <property type="entry name" value="L11_bact"/>
    <property type="match status" value="1"/>
</dbReference>
<dbReference type="PANTHER" id="PTHR11661">
    <property type="entry name" value="60S RIBOSOMAL PROTEIN L12"/>
    <property type="match status" value="1"/>
</dbReference>
<dbReference type="PANTHER" id="PTHR11661:SF1">
    <property type="entry name" value="LARGE RIBOSOMAL SUBUNIT PROTEIN UL11M"/>
    <property type="match status" value="1"/>
</dbReference>
<dbReference type="Pfam" id="PF00298">
    <property type="entry name" value="Ribosomal_L11"/>
    <property type="match status" value="1"/>
</dbReference>
<dbReference type="Pfam" id="PF03946">
    <property type="entry name" value="Ribosomal_L11_N"/>
    <property type="match status" value="1"/>
</dbReference>
<dbReference type="SMART" id="SM00649">
    <property type="entry name" value="RL11"/>
    <property type="match status" value="1"/>
</dbReference>
<dbReference type="SUPFAM" id="SSF54747">
    <property type="entry name" value="Ribosomal L11/L12e N-terminal domain"/>
    <property type="match status" value="1"/>
</dbReference>
<dbReference type="SUPFAM" id="SSF46906">
    <property type="entry name" value="Ribosomal protein L11, C-terminal domain"/>
    <property type="match status" value="1"/>
</dbReference>
<dbReference type="PROSITE" id="PS00359">
    <property type="entry name" value="RIBOSOMAL_L11"/>
    <property type="match status" value="1"/>
</dbReference>
<keyword id="KW-0488">Methylation</keyword>
<keyword id="KW-0687">Ribonucleoprotein</keyword>
<keyword id="KW-0689">Ribosomal protein</keyword>
<keyword id="KW-0694">RNA-binding</keyword>
<keyword id="KW-0699">rRNA-binding</keyword>
<feature type="chain" id="PRO_1000132873" description="Large ribosomal subunit protein uL11">
    <location>
        <begin position="1"/>
        <end position="143"/>
    </location>
</feature>
<comment type="function">
    <text evidence="1">Forms part of the ribosomal stalk which helps the ribosome interact with GTP-bound translation factors.</text>
</comment>
<comment type="subunit">
    <text evidence="1">Part of the ribosomal stalk of the 50S ribosomal subunit. Interacts with L10 and the large rRNA to form the base of the stalk. L10 forms an elongated spine to which L12 dimers bind in a sequential fashion forming a multimeric L10(L12)X complex.</text>
</comment>
<comment type="PTM">
    <text evidence="1">One or more lysine residues are methylated.</text>
</comment>
<comment type="similarity">
    <text evidence="1">Belongs to the universal ribosomal protein uL11 family.</text>
</comment>
<name>RL11_BURCJ</name>